<comment type="similarity">
    <text evidence="1">Belongs to the bacterial ribosomal protein bS21 family.</text>
</comment>
<comment type="sequence caution" evidence="2">
    <conflict type="erroneous initiation">
        <sequence resource="EMBL-CDS" id="ABC36727"/>
    </conflict>
    <text>Extended N-terminus.</text>
</comment>
<dbReference type="EMBL" id="AF447448">
    <property type="protein sequence ID" value="AAL46939.1"/>
    <property type="molecule type" value="Genomic_DNA"/>
</dbReference>
<dbReference type="EMBL" id="CP000086">
    <property type="protein sequence ID" value="ABC36727.1"/>
    <property type="status" value="ALT_INIT"/>
    <property type="molecule type" value="Genomic_DNA"/>
</dbReference>
<dbReference type="SMR" id="Q2STR0"/>
<dbReference type="KEGG" id="bte:BTH_I3195"/>
<dbReference type="HOGENOM" id="CLU_1812178_0_0_4"/>
<dbReference type="Proteomes" id="UP000001930">
    <property type="component" value="Chromosome I"/>
</dbReference>
<dbReference type="GO" id="GO:1990904">
    <property type="term" value="C:ribonucleoprotein complex"/>
    <property type="evidence" value="ECO:0007669"/>
    <property type="project" value="UniProtKB-KW"/>
</dbReference>
<dbReference type="GO" id="GO:0005840">
    <property type="term" value="C:ribosome"/>
    <property type="evidence" value="ECO:0007669"/>
    <property type="project" value="UniProtKB-KW"/>
</dbReference>
<dbReference type="GO" id="GO:0003735">
    <property type="term" value="F:structural constituent of ribosome"/>
    <property type="evidence" value="ECO:0007669"/>
    <property type="project" value="InterPro"/>
</dbReference>
<dbReference type="GO" id="GO:0006412">
    <property type="term" value="P:translation"/>
    <property type="evidence" value="ECO:0007669"/>
    <property type="project" value="UniProtKB-UniRule"/>
</dbReference>
<dbReference type="Gene3D" id="1.20.5.1150">
    <property type="entry name" value="Ribosomal protein S8"/>
    <property type="match status" value="1"/>
</dbReference>
<dbReference type="HAMAP" id="MF_00358">
    <property type="entry name" value="Ribosomal_bS21"/>
    <property type="match status" value="1"/>
</dbReference>
<dbReference type="InterPro" id="IPR001911">
    <property type="entry name" value="Ribosomal_bS21"/>
</dbReference>
<dbReference type="InterPro" id="IPR038380">
    <property type="entry name" value="Ribosomal_bS21_sf"/>
</dbReference>
<dbReference type="NCBIfam" id="TIGR00030">
    <property type="entry name" value="S21p"/>
    <property type="match status" value="1"/>
</dbReference>
<dbReference type="PANTHER" id="PTHR21109">
    <property type="entry name" value="MITOCHONDRIAL 28S RIBOSOMAL PROTEIN S21"/>
    <property type="match status" value="1"/>
</dbReference>
<dbReference type="PANTHER" id="PTHR21109:SF22">
    <property type="entry name" value="SMALL RIBOSOMAL SUBUNIT PROTEIN BS21"/>
    <property type="match status" value="1"/>
</dbReference>
<dbReference type="Pfam" id="PF01165">
    <property type="entry name" value="Ribosomal_S21"/>
    <property type="match status" value="1"/>
</dbReference>
<dbReference type="PRINTS" id="PR00976">
    <property type="entry name" value="RIBOSOMALS21"/>
</dbReference>
<reference key="1">
    <citation type="journal article" date="2002" name="Mol. Pathol.">
        <title>Strategies for PCR based detection of Burkholderia pseudomallei DNA in paraffin wax embedded tissues.</title>
        <authorList>
            <person name="Hagen R.M."/>
            <person name="Gauthier Y.P."/>
            <person name="Sprague L.D."/>
            <person name="Vidal D.R."/>
            <person name="Zysk G."/>
            <person name="Finke E.J."/>
            <person name="Neubauer H."/>
        </authorList>
    </citation>
    <scope>NUCLEOTIDE SEQUENCE [GENOMIC DNA]</scope>
    <source>
        <strain>ATCC 700388 / DSM 13276 / CCUG 48851 / CIP 106301 / E264</strain>
    </source>
</reference>
<reference key="2">
    <citation type="journal article" date="2005" name="BMC Genomics">
        <title>Bacterial genome adaptation to niches: divergence of the potential virulence genes in three Burkholderia species of different survival strategies.</title>
        <authorList>
            <person name="Kim H.S."/>
            <person name="Schell M.A."/>
            <person name="Yu Y."/>
            <person name="Ulrich R.L."/>
            <person name="Sarria S.H."/>
            <person name="Nierman W.C."/>
            <person name="DeShazer D."/>
        </authorList>
    </citation>
    <scope>NUCLEOTIDE SEQUENCE [LARGE SCALE GENOMIC DNA]</scope>
    <source>
        <strain>ATCC 700388 / DSM 13276 / CCUG 48851 / CIP 106301 / E264</strain>
    </source>
</reference>
<gene>
    <name evidence="1" type="primary">rpsU1</name>
    <name type="ordered locus">BTH_I3195</name>
</gene>
<evidence type="ECO:0000255" key="1">
    <source>
        <dbReference type="HAMAP-Rule" id="MF_00358"/>
    </source>
</evidence>
<evidence type="ECO:0000305" key="2"/>
<proteinExistence type="inferred from homology"/>
<feature type="chain" id="PRO_0000266644" description="Small ribosomal subunit protein bS21A">
    <location>
        <begin position="1"/>
        <end position="70"/>
    </location>
</feature>
<name>RS211_BURTA</name>
<sequence>MTTILLKENEPFEVAIRRFRRAIEKNGLIAELRERQAYEKPTAVRKRKKAAAVKRLHKRLRSQMLPKKLH</sequence>
<accession>Q2STR0</accession>
<accession>Q71MG8</accession>
<protein>
    <recommendedName>
        <fullName evidence="1">Small ribosomal subunit protein bS21A</fullName>
    </recommendedName>
    <alternativeName>
        <fullName evidence="2">30S ribosomal protein S21 1</fullName>
    </alternativeName>
</protein>
<organism>
    <name type="scientific">Burkholderia thailandensis (strain ATCC 700388 / DSM 13276 / CCUG 48851 / CIP 106301 / E264)</name>
    <dbReference type="NCBI Taxonomy" id="271848"/>
    <lineage>
        <taxon>Bacteria</taxon>
        <taxon>Pseudomonadati</taxon>
        <taxon>Pseudomonadota</taxon>
        <taxon>Betaproteobacteria</taxon>
        <taxon>Burkholderiales</taxon>
        <taxon>Burkholderiaceae</taxon>
        <taxon>Burkholderia</taxon>
        <taxon>pseudomallei group</taxon>
    </lineage>
</organism>
<keyword id="KW-0687">Ribonucleoprotein</keyword>
<keyword id="KW-0689">Ribosomal protein</keyword>